<organism>
    <name type="scientific">Mus musculus</name>
    <name type="common">Mouse</name>
    <dbReference type="NCBI Taxonomy" id="10090"/>
    <lineage>
        <taxon>Eukaryota</taxon>
        <taxon>Metazoa</taxon>
        <taxon>Chordata</taxon>
        <taxon>Craniata</taxon>
        <taxon>Vertebrata</taxon>
        <taxon>Euteleostomi</taxon>
        <taxon>Mammalia</taxon>
        <taxon>Eutheria</taxon>
        <taxon>Euarchontoglires</taxon>
        <taxon>Glires</taxon>
        <taxon>Rodentia</taxon>
        <taxon>Myomorpha</taxon>
        <taxon>Muroidea</taxon>
        <taxon>Muridae</taxon>
        <taxon>Murinae</taxon>
        <taxon>Mus</taxon>
        <taxon>Mus</taxon>
    </lineage>
</organism>
<dbReference type="EMBL" id="AF539793">
    <property type="protein sequence ID" value="AAO13383.1"/>
    <property type="molecule type" value="mRNA"/>
</dbReference>
<dbReference type="EMBL" id="AK052294">
    <property type="protein sequence ID" value="BAC34921.1"/>
    <property type="molecule type" value="mRNA"/>
</dbReference>
<dbReference type="EMBL" id="AK081821">
    <property type="protein sequence ID" value="BAC38342.1"/>
    <property type="molecule type" value="mRNA"/>
</dbReference>
<dbReference type="EMBL" id="AK084418">
    <property type="protein sequence ID" value="BAC39178.1"/>
    <property type="molecule type" value="mRNA"/>
</dbReference>
<dbReference type="EMBL" id="AL603745">
    <property type="status" value="NOT_ANNOTATED_CDS"/>
    <property type="molecule type" value="Genomic_DNA"/>
</dbReference>
<dbReference type="EMBL" id="BC084585">
    <property type="protein sequence ID" value="AAH84585.1"/>
    <property type="molecule type" value="mRNA"/>
</dbReference>
<dbReference type="CCDS" id="CCDS36251.1">
    <molecule id="Q8CGY6-2"/>
</dbReference>
<dbReference type="RefSeq" id="NP_848795.3">
    <molecule id="Q8CGY6-2"/>
    <property type="nucleotide sequence ID" value="NM_178680.5"/>
</dbReference>
<dbReference type="SMR" id="Q8CGY6"/>
<dbReference type="BioGRID" id="229832">
    <property type="interactions" value="2"/>
</dbReference>
<dbReference type="FunCoup" id="Q8CGY6">
    <property type="interactions" value="770"/>
</dbReference>
<dbReference type="IntAct" id="Q8CGY6">
    <property type="interactions" value="2"/>
</dbReference>
<dbReference type="STRING" id="10090.ENSMUSP00000018989"/>
<dbReference type="GlyGen" id="Q8CGY6">
    <property type="glycosylation" value="1 site, 1 O-linked glycan (1 site)"/>
</dbReference>
<dbReference type="iPTMnet" id="Q8CGY6"/>
<dbReference type="PhosphoSitePlus" id="Q8CGY6"/>
<dbReference type="CPTAC" id="non-CPTAC-4069"/>
<dbReference type="jPOST" id="Q8CGY6"/>
<dbReference type="PaxDb" id="10090-ENSMUSP00000103795"/>
<dbReference type="PeptideAtlas" id="Q8CGY6"/>
<dbReference type="ProteomicsDB" id="300085">
    <molecule id="Q8CGY6-1"/>
</dbReference>
<dbReference type="ProteomicsDB" id="300086">
    <molecule id="Q8CGY6-2"/>
</dbReference>
<dbReference type="Antibodypedia" id="2894">
    <property type="antibodies" value="159 antibodies from 27 providers"/>
</dbReference>
<dbReference type="DNASU" id="217012"/>
<dbReference type="Ensembl" id="ENSMUST00000018989.14">
    <molecule id="Q8CGY6-2"/>
    <property type="protein sequence ID" value="ENSMUSP00000018989.8"/>
    <property type="gene ID" value="ENSMUSG00000018845.15"/>
</dbReference>
<dbReference type="Ensembl" id="ENSMUST00000108160.8">
    <molecule id="Q8CGY6-1"/>
    <property type="protein sequence ID" value="ENSMUSP00000103795.2"/>
    <property type="gene ID" value="ENSMUSG00000018845.15"/>
</dbReference>
<dbReference type="Ensembl" id="ENSMUST00000164945.3">
    <molecule id="Q8CGY6-1"/>
    <property type="protein sequence ID" value="ENSMUSP00000129405.2"/>
    <property type="gene ID" value="ENSMUSG00000018845.15"/>
</dbReference>
<dbReference type="GeneID" id="217012"/>
<dbReference type="KEGG" id="mmu:217012"/>
<dbReference type="UCSC" id="uc007knu.2">
    <molecule id="Q8CGY6-2"/>
    <property type="organism name" value="mouse"/>
</dbReference>
<dbReference type="UCSC" id="uc007knw.1">
    <molecule id="Q8CGY6-1"/>
    <property type="organism name" value="mouse"/>
</dbReference>
<dbReference type="AGR" id="MGI:2443377"/>
<dbReference type="CTD" id="146862"/>
<dbReference type="MGI" id="MGI:2443377">
    <property type="gene designation" value="Unc45b"/>
</dbReference>
<dbReference type="VEuPathDB" id="HostDB:ENSMUSG00000018845"/>
<dbReference type="eggNOG" id="KOG4151">
    <property type="taxonomic scope" value="Eukaryota"/>
</dbReference>
<dbReference type="GeneTree" id="ENSGT00940000157654"/>
<dbReference type="HOGENOM" id="CLU_007331_0_0_1"/>
<dbReference type="InParanoid" id="Q8CGY6"/>
<dbReference type="OMA" id="DTQTRRW"/>
<dbReference type="OrthoDB" id="199930at2759"/>
<dbReference type="PhylomeDB" id="Q8CGY6"/>
<dbReference type="TreeFam" id="TF314096"/>
<dbReference type="BioGRID-ORCS" id="217012">
    <property type="hits" value="3 hits in 78 CRISPR screens"/>
</dbReference>
<dbReference type="PRO" id="PR:Q8CGY6"/>
<dbReference type="Proteomes" id="UP000000589">
    <property type="component" value="Chromosome 11"/>
</dbReference>
<dbReference type="RNAct" id="Q8CGY6">
    <property type="molecule type" value="protein"/>
</dbReference>
<dbReference type="Bgee" id="ENSMUSG00000018845">
    <property type="expression patterns" value="Expressed in interventricular septum and 131 other cell types or tissues"/>
</dbReference>
<dbReference type="GO" id="GO:0031672">
    <property type="term" value="C:A band"/>
    <property type="evidence" value="ECO:0007669"/>
    <property type="project" value="UniProtKB-SubCell"/>
</dbReference>
<dbReference type="GO" id="GO:0005829">
    <property type="term" value="C:cytosol"/>
    <property type="evidence" value="ECO:0000314"/>
    <property type="project" value="MGI"/>
</dbReference>
<dbReference type="GO" id="GO:0048471">
    <property type="term" value="C:perinuclear region of cytoplasm"/>
    <property type="evidence" value="ECO:0007669"/>
    <property type="project" value="UniProtKB-SubCell"/>
</dbReference>
<dbReference type="GO" id="GO:0030018">
    <property type="term" value="C:Z disc"/>
    <property type="evidence" value="ECO:0007669"/>
    <property type="project" value="UniProtKB-SubCell"/>
</dbReference>
<dbReference type="GO" id="GO:0051879">
    <property type="term" value="F:Hsp90 protein binding"/>
    <property type="evidence" value="ECO:0000314"/>
    <property type="project" value="MGI"/>
</dbReference>
<dbReference type="GO" id="GO:0030154">
    <property type="term" value="P:cell differentiation"/>
    <property type="evidence" value="ECO:0007669"/>
    <property type="project" value="UniProtKB-KW"/>
</dbReference>
<dbReference type="GO" id="GO:0061077">
    <property type="term" value="P:chaperone-mediated protein folding"/>
    <property type="evidence" value="ECO:0000314"/>
    <property type="project" value="MGI"/>
</dbReference>
<dbReference type="GO" id="GO:0002088">
    <property type="term" value="P:lens development in camera-type eye"/>
    <property type="evidence" value="ECO:0000250"/>
    <property type="project" value="UniProtKB"/>
</dbReference>
<dbReference type="GO" id="GO:0007517">
    <property type="term" value="P:muscle organ development"/>
    <property type="evidence" value="ECO:0007669"/>
    <property type="project" value="UniProtKB-KW"/>
</dbReference>
<dbReference type="FunFam" id="1.25.10.10:FF:000043">
    <property type="entry name" value="Unc-45 myosin chaperone B"/>
    <property type="match status" value="1"/>
</dbReference>
<dbReference type="FunFam" id="1.25.10.10:FF:000153">
    <property type="entry name" value="Unc-45 myosin chaperone B"/>
    <property type="match status" value="1"/>
</dbReference>
<dbReference type="FunFam" id="1.25.40.10:FF:000025">
    <property type="entry name" value="Unc-45 myosin chaperone B"/>
    <property type="match status" value="1"/>
</dbReference>
<dbReference type="Gene3D" id="1.25.10.10">
    <property type="entry name" value="Leucine-rich Repeat Variant"/>
    <property type="match status" value="2"/>
</dbReference>
<dbReference type="Gene3D" id="1.25.40.10">
    <property type="entry name" value="Tetratricopeptide repeat domain"/>
    <property type="match status" value="1"/>
</dbReference>
<dbReference type="InterPro" id="IPR011989">
    <property type="entry name" value="ARM-like"/>
</dbReference>
<dbReference type="InterPro" id="IPR016024">
    <property type="entry name" value="ARM-type_fold"/>
</dbReference>
<dbReference type="InterPro" id="IPR000225">
    <property type="entry name" value="Armadillo"/>
</dbReference>
<dbReference type="InterPro" id="IPR011990">
    <property type="entry name" value="TPR-like_helical_dom_sf"/>
</dbReference>
<dbReference type="InterPro" id="IPR019734">
    <property type="entry name" value="TPR_rpt"/>
</dbReference>
<dbReference type="InterPro" id="IPR024660">
    <property type="entry name" value="UCS_central_dom"/>
</dbReference>
<dbReference type="PANTHER" id="PTHR45994">
    <property type="entry name" value="FI21225P1"/>
    <property type="match status" value="1"/>
</dbReference>
<dbReference type="PANTHER" id="PTHR45994:SF2">
    <property type="entry name" value="PROTEIN UNC-45 HOMOLOG B"/>
    <property type="match status" value="1"/>
</dbReference>
<dbReference type="Pfam" id="PF11701">
    <property type="entry name" value="UNC45-central"/>
    <property type="match status" value="1"/>
</dbReference>
<dbReference type="SMART" id="SM00185">
    <property type="entry name" value="ARM"/>
    <property type="match status" value="3"/>
</dbReference>
<dbReference type="SMART" id="SM00028">
    <property type="entry name" value="TPR"/>
    <property type="match status" value="3"/>
</dbReference>
<dbReference type="SUPFAM" id="SSF48371">
    <property type="entry name" value="ARM repeat"/>
    <property type="match status" value="2"/>
</dbReference>
<dbReference type="SUPFAM" id="SSF48452">
    <property type="entry name" value="TPR-like"/>
    <property type="match status" value="1"/>
</dbReference>
<dbReference type="PROSITE" id="PS50005">
    <property type="entry name" value="TPR"/>
    <property type="match status" value="3"/>
</dbReference>
<dbReference type="PROSITE" id="PS50293">
    <property type="entry name" value="TPR_REGION"/>
    <property type="match status" value="1"/>
</dbReference>
<comment type="function">
    <text evidence="1 3 4 5">Acts as a co-chaperone for HSP90 and is required for proper folding of the myosin motor domain. Plays a role in sarcomere formation during muscle cell development (PubMed:12356907, PubMed:18326487, PubMed:18478096). Is necessary for normal early lens development (By similarity).</text>
</comment>
<comment type="subunit">
    <text evidence="2 4 5">Interacts with HSP90 in an ATP-independent manner (PubMed:18326487, PubMed:18478096). Interacts with UBE4B; the interaction may target UNC45B for proteasomal degradation (By similarity).</text>
</comment>
<comment type="subcellular location">
    <subcellularLocation>
        <location evidence="1">Cytoplasm</location>
        <location evidence="1">Myofibril</location>
        <location evidence="1">Sarcomere</location>
        <location evidence="1">Z line</location>
    </subcellularLocation>
    <subcellularLocation>
        <location evidence="2">Cytoplasm</location>
        <location evidence="2">Myofibril</location>
        <location evidence="2">Sarcomere</location>
        <location evidence="2">A band</location>
    </subcellularLocation>
    <subcellularLocation>
        <location evidence="1">Cytoplasm</location>
        <location evidence="1">Perinuclear region</location>
    </subcellularLocation>
    <subcellularLocation>
        <location evidence="5">Cytoplasm</location>
        <location evidence="5">Cytosol</location>
    </subcellularLocation>
    <text evidence="1">Expressed at the Z line and in the perinuclear region of myofibrils. Translocates to the A band in response to stress conditions and fibril damage.</text>
</comment>
<comment type="alternative products">
    <event type="alternative splicing"/>
    <isoform>
        <id>Q8CGY6-1</id>
        <name>1</name>
        <sequence type="displayed"/>
    </isoform>
    <isoform>
        <id>Q8CGY6-2</id>
        <name>2</name>
        <sequence type="described" ref="VSP_020588"/>
    </isoform>
</comment>
<comment type="tissue specificity">
    <text evidence="3">Highly expressed in adult skeletal muscle and heart. Detected at intermediate levels in lung. Highly expressed in embryonic heart.</text>
</comment>
<comment type="developmental stage">
    <text>Detected in fusing myoblasts during muscle cell differentiation. Highly expressed in young myotubes that are in the process of assembling and remodeling myofibrils. Subsequently, levels decrease during myotube maturation.</text>
</comment>
<accession>Q8CGY6</accession>
<accession>Q5XG72</accession>
<accession>Q8BHC5</accession>
<accession>Q8BWK3</accession>
<protein>
    <recommendedName>
        <fullName>Protein unc-45 homolog B</fullName>
        <shortName>Unc-45B</shortName>
    </recommendedName>
</protein>
<sequence length="931" mass="103638">MAEAEAAQLKEEGNRHFQLQDYKAATKSYSQALKLTKDKALLATLYRNRAACGLKMESYAQAASDASRAIDINSADIKALYRRCQALEHLGKLDQAFKDVQRCATLEPRNQNFQETLRRLNTSIQEQLRVQFSTDSRVQTMFEILLNENSEADKREKAANNLIVLGREEAGAERIFQSNGVALLLQLMNTQRPELLLAAVRTLSGMCSGHRARATAILHAVRIDRICSLMALENEEMSLAVCNLLQAIIDSLSGEDKREHRGKEEALVLDTKKDLKQITSHLLDMLVSKKVSGQGRDQALNLLNKNVPRKDLSIHDNSRTIYVVDNGLRKILKVVGQVPDLPSCLPLTDNTRMLASILINKLYDDLRCDPERDHFRKICEEYITSKFDPQDMDKNVNAIQTVSGILQGPFDLGNQLLGMKGVMEMMVALCGSEREADQLVAVEALIHASTKLSRATFIITNGVTLLKQIYKTTKNEKIKIRTLVGLCKLGSAGGSDYGLRQFAEGSTEKLAKQCRKWLCNTAIDTRTRRWAVEGLAYLTLDADVKDDFVQDIPALQAMFELAKARTSDKTILYSVANTLVNCTNSYDVKEVVPELVQLAKFSKQHVPEEHPKDKKDFVDLRVKRLLKAGVISALACMVKADSAILTDQTKELLARVFLALCDNPKDRGTIVAQGGGKALIPLALEGTDVGKVKAAHGLAKIAAVSNPDIAFPGERVYEVVRPLVSLLDTQRDGLQNYEALLGLTNLSGRSDKLRQKIFKEKALPDIENYMFENHDQLRQAATECMCNMVLNKEVQERFLADGNDRLKLVVLLCGEDDHKLQNAAAGALAMLTAAHKKLCLKMTEVTTQWLEILQRLCLHDQLSVQHRGLVIAHNLLSADAELARKLVESELLEILTVVGKQEPDEKRAAVVQTARECLIKCMDYGFIKPVS</sequence>
<gene>
    <name type="primary">Unc45b</name>
    <name type="synonym">Cmya4</name>
</gene>
<evidence type="ECO:0000250" key="1">
    <source>
        <dbReference type="UniProtKB" id="Q6DGE9"/>
    </source>
</evidence>
<evidence type="ECO:0000250" key="2">
    <source>
        <dbReference type="UniProtKB" id="Q8IWX7"/>
    </source>
</evidence>
<evidence type="ECO:0000269" key="3">
    <source>
    </source>
</evidence>
<evidence type="ECO:0000269" key="4">
    <source>
    </source>
</evidence>
<evidence type="ECO:0000269" key="5">
    <source>
    </source>
</evidence>
<evidence type="ECO:0000303" key="6">
    <source>
    </source>
</evidence>
<evidence type="ECO:0000303" key="7">
    <source>
    </source>
</evidence>
<evidence type="ECO:0000303" key="8">
    <source>
    </source>
</evidence>
<evidence type="ECO:0000305" key="9"/>
<reference key="1">
    <citation type="journal article" date="2002" name="J. Cell Sci.">
        <title>Two mammalian UNC-45 isoforms are related to distinct cytoskeletal and muscle-specific functions.</title>
        <authorList>
            <person name="Price M.G."/>
            <person name="Landsverk M.L."/>
            <person name="Barral J.M."/>
            <person name="Epstein H.F."/>
        </authorList>
    </citation>
    <scope>NUCLEOTIDE SEQUENCE [MRNA] (ISOFORM 2)</scope>
    <scope>FUNCTION</scope>
    <scope>TISSUE SPECIFICITY</scope>
    <source>
        <strain>C57BL/6J</strain>
        <tissue>Embryo</tissue>
    </source>
</reference>
<reference key="2">
    <citation type="journal article" date="2005" name="Science">
        <title>The transcriptional landscape of the mammalian genome.</title>
        <authorList>
            <person name="Carninci P."/>
            <person name="Kasukawa T."/>
            <person name="Katayama S."/>
            <person name="Gough J."/>
            <person name="Frith M.C."/>
            <person name="Maeda N."/>
            <person name="Oyama R."/>
            <person name="Ravasi T."/>
            <person name="Lenhard B."/>
            <person name="Wells C."/>
            <person name="Kodzius R."/>
            <person name="Shimokawa K."/>
            <person name="Bajic V.B."/>
            <person name="Brenner S.E."/>
            <person name="Batalov S."/>
            <person name="Forrest A.R."/>
            <person name="Zavolan M."/>
            <person name="Davis M.J."/>
            <person name="Wilming L.G."/>
            <person name="Aidinis V."/>
            <person name="Allen J.E."/>
            <person name="Ambesi-Impiombato A."/>
            <person name="Apweiler R."/>
            <person name="Aturaliya R.N."/>
            <person name="Bailey T.L."/>
            <person name="Bansal M."/>
            <person name="Baxter L."/>
            <person name="Beisel K.W."/>
            <person name="Bersano T."/>
            <person name="Bono H."/>
            <person name="Chalk A.M."/>
            <person name="Chiu K.P."/>
            <person name="Choudhary V."/>
            <person name="Christoffels A."/>
            <person name="Clutterbuck D.R."/>
            <person name="Crowe M.L."/>
            <person name="Dalla E."/>
            <person name="Dalrymple B.P."/>
            <person name="de Bono B."/>
            <person name="Della Gatta G."/>
            <person name="di Bernardo D."/>
            <person name="Down T."/>
            <person name="Engstrom P."/>
            <person name="Fagiolini M."/>
            <person name="Faulkner G."/>
            <person name="Fletcher C.F."/>
            <person name="Fukushima T."/>
            <person name="Furuno M."/>
            <person name="Futaki S."/>
            <person name="Gariboldi M."/>
            <person name="Georgii-Hemming P."/>
            <person name="Gingeras T.R."/>
            <person name="Gojobori T."/>
            <person name="Green R.E."/>
            <person name="Gustincich S."/>
            <person name="Harbers M."/>
            <person name="Hayashi Y."/>
            <person name="Hensch T.K."/>
            <person name="Hirokawa N."/>
            <person name="Hill D."/>
            <person name="Huminiecki L."/>
            <person name="Iacono M."/>
            <person name="Ikeo K."/>
            <person name="Iwama A."/>
            <person name="Ishikawa T."/>
            <person name="Jakt M."/>
            <person name="Kanapin A."/>
            <person name="Katoh M."/>
            <person name="Kawasawa Y."/>
            <person name="Kelso J."/>
            <person name="Kitamura H."/>
            <person name="Kitano H."/>
            <person name="Kollias G."/>
            <person name="Krishnan S.P."/>
            <person name="Kruger A."/>
            <person name="Kummerfeld S.K."/>
            <person name="Kurochkin I.V."/>
            <person name="Lareau L.F."/>
            <person name="Lazarevic D."/>
            <person name="Lipovich L."/>
            <person name="Liu J."/>
            <person name="Liuni S."/>
            <person name="McWilliam S."/>
            <person name="Madan Babu M."/>
            <person name="Madera M."/>
            <person name="Marchionni L."/>
            <person name="Matsuda H."/>
            <person name="Matsuzawa S."/>
            <person name="Miki H."/>
            <person name="Mignone F."/>
            <person name="Miyake S."/>
            <person name="Morris K."/>
            <person name="Mottagui-Tabar S."/>
            <person name="Mulder N."/>
            <person name="Nakano N."/>
            <person name="Nakauchi H."/>
            <person name="Ng P."/>
            <person name="Nilsson R."/>
            <person name="Nishiguchi S."/>
            <person name="Nishikawa S."/>
            <person name="Nori F."/>
            <person name="Ohara O."/>
            <person name="Okazaki Y."/>
            <person name="Orlando V."/>
            <person name="Pang K.C."/>
            <person name="Pavan W.J."/>
            <person name="Pavesi G."/>
            <person name="Pesole G."/>
            <person name="Petrovsky N."/>
            <person name="Piazza S."/>
            <person name="Reed J."/>
            <person name="Reid J.F."/>
            <person name="Ring B.Z."/>
            <person name="Ringwald M."/>
            <person name="Rost B."/>
            <person name="Ruan Y."/>
            <person name="Salzberg S.L."/>
            <person name="Sandelin A."/>
            <person name="Schneider C."/>
            <person name="Schoenbach C."/>
            <person name="Sekiguchi K."/>
            <person name="Semple C.A."/>
            <person name="Seno S."/>
            <person name="Sessa L."/>
            <person name="Sheng Y."/>
            <person name="Shibata Y."/>
            <person name="Shimada H."/>
            <person name="Shimada K."/>
            <person name="Silva D."/>
            <person name="Sinclair B."/>
            <person name="Sperling S."/>
            <person name="Stupka E."/>
            <person name="Sugiura K."/>
            <person name="Sultana R."/>
            <person name="Takenaka Y."/>
            <person name="Taki K."/>
            <person name="Tammoja K."/>
            <person name="Tan S.L."/>
            <person name="Tang S."/>
            <person name="Taylor M.S."/>
            <person name="Tegner J."/>
            <person name="Teichmann S.A."/>
            <person name="Ueda H.R."/>
            <person name="van Nimwegen E."/>
            <person name="Verardo R."/>
            <person name="Wei C.L."/>
            <person name="Yagi K."/>
            <person name="Yamanishi H."/>
            <person name="Zabarovsky E."/>
            <person name="Zhu S."/>
            <person name="Zimmer A."/>
            <person name="Hide W."/>
            <person name="Bult C."/>
            <person name="Grimmond S.M."/>
            <person name="Teasdale R.D."/>
            <person name="Liu E.T."/>
            <person name="Brusic V."/>
            <person name="Quackenbush J."/>
            <person name="Wahlestedt C."/>
            <person name="Mattick J.S."/>
            <person name="Hume D.A."/>
            <person name="Kai C."/>
            <person name="Sasaki D."/>
            <person name="Tomaru Y."/>
            <person name="Fukuda S."/>
            <person name="Kanamori-Katayama M."/>
            <person name="Suzuki M."/>
            <person name="Aoki J."/>
            <person name="Arakawa T."/>
            <person name="Iida J."/>
            <person name="Imamura K."/>
            <person name="Itoh M."/>
            <person name="Kato T."/>
            <person name="Kawaji H."/>
            <person name="Kawagashira N."/>
            <person name="Kawashima T."/>
            <person name="Kojima M."/>
            <person name="Kondo S."/>
            <person name="Konno H."/>
            <person name="Nakano K."/>
            <person name="Ninomiya N."/>
            <person name="Nishio T."/>
            <person name="Okada M."/>
            <person name="Plessy C."/>
            <person name="Shibata K."/>
            <person name="Shiraki T."/>
            <person name="Suzuki S."/>
            <person name="Tagami M."/>
            <person name="Waki K."/>
            <person name="Watahiki A."/>
            <person name="Okamura-Oho Y."/>
            <person name="Suzuki H."/>
            <person name="Kawai J."/>
            <person name="Hayashizaki Y."/>
        </authorList>
    </citation>
    <scope>NUCLEOTIDE SEQUENCE [LARGE SCALE MRNA] (ISOFORM 2)</scope>
    <source>
        <strain>C57BL/6J</strain>
        <tissue>Embryonic eye</tissue>
        <tissue>Embryonic head</tissue>
        <tissue>Embryonic heart</tissue>
    </source>
</reference>
<reference key="3">
    <citation type="journal article" date="2009" name="PLoS Biol.">
        <title>Lineage-specific biology revealed by a finished genome assembly of the mouse.</title>
        <authorList>
            <person name="Church D.M."/>
            <person name="Goodstadt L."/>
            <person name="Hillier L.W."/>
            <person name="Zody M.C."/>
            <person name="Goldstein S."/>
            <person name="She X."/>
            <person name="Bult C.J."/>
            <person name="Agarwala R."/>
            <person name="Cherry J.L."/>
            <person name="DiCuccio M."/>
            <person name="Hlavina W."/>
            <person name="Kapustin Y."/>
            <person name="Meric P."/>
            <person name="Maglott D."/>
            <person name="Birtle Z."/>
            <person name="Marques A.C."/>
            <person name="Graves T."/>
            <person name="Zhou S."/>
            <person name="Teague B."/>
            <person name="Potamousis K."/>
            <person name="Churas C."/>
            <person name="Place M."/>
            <person name="Herschleb J."/>
            <person name="Runnheim R."/>
            <person name="Forrest D."/>
            <person name="Amos-Landgraf J."/>
            <person name="Schwartz D.C."/>
            <person name="Cheng Z."/>
            <person name="Lindblad-Toh K."/>
            <person name="Eichler E.E."/>
            <person name="Ponting C.P."/>
        </authorList>
    </citation>
    <scope>NUCLEOTIDE SEQUENCE [LARGE SCALE GENOMIC DNA]</scope>
    <source>
        <strain>C57BL/6J</strain>
    </source>
</reference>
<reference key="4">
    <citation type="journal article" date="2004" name="Genome Res.">
        <title>The status, quality, and expansion of the NIH full-length cDNA project: the Mammalian Gene Collection (MGC).</title>
        <authorList>
            <consortium name="The MGC Project Team"/>
        </authorList>
    </citation>
    <scope>NUCLEOTIDE SEQUENCE [LARGE SCALE MRNA] (ISOFORM 2)</scope>
    <source>
        <strain>C57BL/6J</strain>
        <tissue>Embryo</tissue>
    </source>
</reference>
<reference key="5">
    <citation type="journal article" date="2008" name="J. Biol. Chem.">
        <title>Unc45 activates Hsp90-dependent folding of the myosin motor domain.</title>
        <authorList>
            <person name="Liu L."/>
            <person name="Srikakulam R."/>
            <person name="Winkelmann D.A."/>
        </authorList>
    </citation>
    <scope>FUNCTION</scope>
    <scope>INTERACTION WITH HSP90</scope>
</reference>
<reference key="6">
    <citation type="journal article" date="2008" name="PLoS ONE">
        <title>Unc45b forms a cytosolic complex with Hsp90 and targets the unfolded myosin motor domain.</title>
        <authorList>
            <person name="Srikakulam R."/>
            <person name="Liu L."/>
            <person name="Winkelmann D.A."/>
        </authorList>
    </citation>
    <scope>FUNCTION</scope>
    <scope>SUBCELLULAR LOCATION</scope>
    <scope>INTERACTION WITH HSP90</scope>
</reference>
<reference key="7">
    <citation type="journal article" date="2010" name="Cell">
        <title>A tissue-specific atlas of mouse protein phosphorylation and expression.</title>
        <authorList>
            <person name="Huttlin E.L."/>
            <person name="Jedrychowski M.P."/>
            <person name="Elias J.E."/>
            <person name="Goswami T."/>
            <person name="Rad R."/>
            <person name="Beausoleil S.A."/>
            <person name="Villen J."/>
            <person name="Haas W."/>
            <person name="Sowa M.E."/>
            <person name="Gygi S.P."/>
        </authorList>
    </citation>
    <scope>IDENTIFICATION BY MASS SPECTROMETRY [LARGE SCALE ANALYSIS]</scope>
    <source>
        <tissue>Brown adipose tissue</tissue>
        <tissue>Heart</tissue>
    </source>
</reference>
<feature type="chain" id="PRO_0000249893" description="Protein unc-45 homolog B">
    <location>
        <begin position="1"/>
        <end position="931"/>
    </location>
</feature>
<feature type="repeat" description="TPR 1">
    <location>
        <begin position="6"/>
        <end position="39"/>
    </location>
</feature>
<feature type="repeat" description="TPR 2">
    <location>
        <begin position="43"/>
        <end position="76"/>
    </location>
</feature>
<feature type="repeat" description="TPR 3">
    <location>
        <begin position="77"/>
        <end position="110"/>
    </location>
</feature>
<feature type="repeat" description="ARM 1">
    <location>
        <begin position="169"/>
        <end position="208"/>
    </location>
</feature>
<feature type="repeat" description="ARM 2">
    <location>
        <begin position="211"/>
        <end position="250"/>
    </location>
</feature>
<feature type="repeat" description="ARM 3">
    <location>
        <begin position="751"/>
        <end position="790"/>
    </location>
</feature>
<feature type="splice variant" id="VSP_020588" description="In isoform 2." evidence="6 7 8">
    <location>
        <begin position="564"/>
        <end position="565"/>
    </location>
</feature>
<feature type="sequence conflict" description="In Ref. 4; AAH84585." evidence="9" ref="4">
    <original>F</original>
    <variation>L</variation>
    <location>
        <position position="176"/>
    </location>
</feature>
<feature type="sequence conflict" description="In Ref. 2; BAC34921." evidence="9" ref="2">
    <original>S</original>
    <variation>I</variation>
    <location>
        <position position="725"/>
    </location>
</feature>
<keyword id="KW-0025">Alternative splicing</keyword>
<keyword id="KW-0143">Chaperone</keyword>
<keyword id="KW-0963">Cytoplasm</keyword>
<keyword id="KW-0217">Developmental protein</keyword>
<keyword id="KW-0221">Differentiation</keyword>
<keyword id="KW-0517">Myogenesis</keyword>
<keyword id="KW-1185">Reference proteome</keyword>
<keyword id="KW-0677">Repeat</keyword>
<keyword id="KW-0802">TPR repeat</keyword>
<name>UN45B_MOUSE</name>
<proteinExistence type="evidence at protein level"/>